<organism>
    <name type="scientific">Shigella flexneri</name>
    <dbReference type="NCBI Taxonomy" id="623"/>
    <lineage>
        <taxon>Bacteria</taxon>
        <taxon>Pseudomonadati</taxon>
        <taxon>Pseudomonadota</taxon>
        <taxon>Gammaproteobacteria</taxon>
        <taxon>Enterobacterales</taxon>
        <taxon>Enterobacteriaceae</taxon>
        <taxon>Shigella</taxon>
    </lineage>
</organism>
<gene>
    <name evidence="1" type="primary">argH</name>
    <name type="ordered locus">SF4037</name>
    <name type="ordered locus">S3709</name>
</gene>
<reference key="1">
    <citation type="journal article" date="2002" name="Nucleic Acids Res.">
        <title>Genome sequence of Shigella flexneri 2a: insights into pathogenicity through comparison with genomes of Escherichia coli K12 and O157.</title>
        <authorList>
            <person name="Jin Q."/>
            <person name="Yuan Z."/>
            <person name="Xu J."/>
            <person name="Wang Y."/>
            <person name="Shen Y."/>
            <person name="Lu W."/>
            <person name="Wang J."/>
            <person name="Liu H."/>
            <person name="Yang J."/>
            <person name="Yang F."/>
            <person name="Zhang X."/>
            <person name="Zhang J."/>
            <person name="Yang G."/>
            <person name="Wu H."/>
            <person name="Qu D."/>
            <person name="Dong J."/>
            <person name="Sun L."/>
            <person name="Xue Y."/>
            <person name="Zhao A."/>
            <person name="Gao Y."/>
            <person name="Zhu J."/>
            <person name="Kan B."/>
            <person name="Ding K."/>
            <person name="Chen S."/>
            <person name="Cheng H."/>
            <person name="Yao Z."/>
            <person name="He B."/>
            <person name="Chen R."/>
            <person name="Ma D."/>
            <person name="Qiang B."/>
            <person name="Wen Y."/>
            <person name="Hou Y."/>
            <person name="Yu J."/>
        </authorList>
    </citation>
    <scope>NUCLEOTIDE SEQUENCE [LARGE SCALE GENOMIC DNA]</scope>
    <source>
        <strain>301 / Serotype 2a</strain>
    </source>
</reference>
<reference key="2">
    <citation type="journal article" date="2003" name="Infect. Immun.">
        <title>Complete genome sequence and comparative genomics of Shigella flexneri serotype 2a strain 2457T.</title>
        <authorList>
            <person name="Wei J."/>
            <person name="Goldberg M.B."/>
            <person name="Burland V."/>
            <person name="Venkatesan M.M."/>
            <person name="Deng W."/>
            <person name="Fournier G."/>
            <person name="Mayhew G.F."/>
            <person name="Plunkett G. III"/>
            <person name="Rose D.J."/>
            <person name="Darling A."/>
            <person name="Mau B."/>
            <person name="Perna N.T."/>
            <person name="Payne S.M."/>
            <person name="Runyen-Janecky L.J."/>
            <person name="Zhou S."/>
            <person name="Schwartz D.C."/>
            <person name="Blattner F.R."/>
        </authorList>
    </citation>
    <scope>NUCLEOTIDE SEQUENCE [LARGE SCALE GENOMIC DNA]</scope>
    <source>
        <strain>ATCC 700930 / 2457T / Serotype 2a</strain>
    </source>
</reference>
<name>ARLY_SHIFL</name>
<sequence length="457" mass="50346">MALWGGRFTQAADQRFKQFNDSLRFDYRLAEQDIVGSVAWSKALVTVGVLTAEEQAQLEEALNVLLEDVRARPQQILESDAEDIHSWVEGKLIDKVGQLGKKLHTGRSRNDQVATDLKLWCKDTVSELLTANRQLQSALVETAQNNQDAVMPGYTHLQRAQPVTFAHWCLAYVEMLARDESRLQDALKRLDVSPLGCGALAGTAYEIDREQLAGWLGFASATRNSLDSVSDRDHVLELLSAAAIGMVHLSRFAEDLIFFNTGEAGFVELSDRVTSGSSLMPQKKNPDALELIRGKCGRVQGALTGMMMTLKGLPLAYNKDMQEDKEGLFDALDTWLDCLHMAALVLDGIQVKRPRCQEAAQQGYANATELADYLVAKGVPFREAHHIVGEAVVEAIRQGKPLEDLPLSELQKFSQVIGEDVYPILSLQSCLEKRAAKGGVSPQQVAQAIAFAQARLE</sequence>
<protein>
    <recommendedName>
        <fullName evidence="1">Argininosuccinate lyase</fullName>
        <shortName evidence="1">ASAL</shortName>
        <ecNumber evidence="1">4.3.2.1</ecNumber>
    </recommendedName>
    <alternativeName>
        <fullName evidence="1">Arginosuccinase</fullName>
    </alternativeName>
</protein>
<feature type="chain" id="PRO_0000137820" description="Argininosuccinate lyase">
    <location>
        <begin position="1"/>
        <end position="457"/>
    </location>
</feature>
<keyword id="KW-0028">Amino-acid biosynthesis</keyword>
<keyword id="KW-0055">Arginine biosynthesis</keyword>
<keyword id="KW-0963">Cytoplasm</keyword>
<keyword id="KW-0456">Lyase</keyword>
<keyword id="KW-1185">Reference proteome</keyword>
<accession>P59619</accession>
<proteinExistence type="inferred from homology"/>
<dbReference type="EC" id="4.3.2.1" evidence="1"/>
<dbReference type="EMBL" id="AE005674">
    <property type="protein sequence ID" value="AAN45467.1"/>
    <property type="molecule type" value="Genomic_DNA"/>
</dbReference>
<dbReference type="EMBL" id="AE014073">
    <property type="protein sequence ID" value="AAP18735.1"/>
    <property type="molecule type" value="Genomic_DNA"/>
</dbReference>
<dbReference type="RefSeq" id="NP_709760.1">
    <property type="nucleotide sequence ID" value="NC_004337.2"/>
</dbReference>
<dbReference type="RefSeq" id="WP_001230091.1">
    <property type="nucleotide sequence ID" value="NZ_WPGW01000012.1"/>
</dbReference>
<dbReference type="SMR" id="P59619"/>
<dbReference type="STRING" id="198214.SF4037"/>
<dbReference type="PaxDb" id="198214-SF4037"/>
<dbReference type="GeneID" id="1027358"/>
<dbReference type="KEGG" id="sfl:SF4037"/>
<dbReference type="KEGG" id="sfx:S3709"/>
<dbReference type="PATRIC" id="fig|198214.7.peg.4759"/>
<dbReference type="HOGENOM" id="CLU_027272_2_3_6"/>
<dbReference type="UniPathway" id="UPA00068">
    <property type="reaction ID" value="UER00114"/>
</dbReference>
<dbReference type="Proteomes" id="UP000001006">
    <property type="component" value="Chromosome"/>
</dbReference>
<dbReference type="Proteomes" id="UP000002673">
    <property type="component" value="Chromosome"/>
</dbReference>
<dbReference type="GO" id="GO:0005829">
    <property type="term" value="C:cytosol"/>
    <property type="evidence" value="ECO:0007669"/>
    <property type="project" value="TreeGrafter"/>
</dbReference>
<dbReference type="GO" id="GO:0004056">
    <property type="term" value="F:argininosuccinate lyase activity"/>
    <property type="evidence" value="ECO:0007669"/>
    <property type="project" value="UniProtKB-UniRule"/>
</dbReference>
<dbReference type="GO" id="GO:0042450">
    <property type="term" value="P:arginine biosynthetic process via ornithine"/>
    <property type="evidence" value="ECO:0007669"/>
    <property type="project" value="InterPro"/>
</dbReference>
<dbReference type="GO" id="GO:0006526">
    <property type="term" value="P:L-arginine biosynthetic process"/>
    <property type="evidence" value="ECO:0007669"/>
    <property type="project" value="UniProtKB-UniRule"/>
</dbReference>
<dbReference type="CDD" id="cd01359">
    <property type="entry name" value="Argininosuccinate_lyase"/>
    <property type="match status" value="1"/>
</dbReference>
<dbReference type="FunFam" id="1.10.275.10:FF:000004">
    <property type="entry name" value="Argininosuccinate lyase"/>
    <property type="match status" value="1"/>
</dbReference>
<dbReference type="FunFam" id="1.10.40.30:FF:000001">
    <property type="entry name" value="Argininosuccinate lyase"/>
    <property type="match status" value="1"/>
</dbReference>
<dbReference type="FunFam" id="1.20.200.10:FF:000006">
    <property type="entry name" value="Argininosuccinate lyase"/>
    <property type="match status" value="1"/>
</dbReference>
<dbReference type="Gene3D" id="1.10.40.30">
    <property type="entry name" value="Fumarase/aspartase (C-terminal domain)"/>
    <property type="match status" value="1"/>
</dbReference>
<dbReference type="Gene3D" id="1.20.200.10">
    <property type="entry name" value="Fumarase/aspartase (Central domain)"/>
    <property type="match status" value="1"/>
</dbReference>
<dbReference type="Gene3D" id="1.10.275.10">
    <property type="entry name" value="Fumarase/aspartase (N-terminal domain)"/>
    <property type="match status" value="1"/>
</dbReference>
<dbReference type="HAMAP" id="MF_00006">
    <property type="entry name" value="Arg_succ_lyase"/>
    <property type="match status" value="1"/>
</dbReference>
<dbReference type="InterPro" id="IPR029419">
    <property type="entry name" value="Arg_succ_lyase_C"/>
</dbReference>
<dbReference type="InterPro" id="IPR009049">
    <property type="entry name" value="Argininosuccinate_lyase"/>
</dbReference>
<dbReference type="InterPro" id="IPR024083">
    <property type="entry name" value="Fumarase/histidase_N"/>
</dbReference>
<dbReference type="InterPro" id="IPR020557">
    <property type="entry name" value="Fumarate_lyase_CS"/>
</dbReference>
<dbReference type="InterPro" id="IPR000362">
    <property type="entry name" value="Fumarate_lyase_fam"/>
</dbReference>
<dbReference type="InterPro" id="IPR022761">
    <property type="entry name" value="Fumarate_lyase_N"/>
</dbReference>
<dbReference type="InterPro" id="IPR008948">
    <property type="entry name" value="L-Aspartase-like"/>
</dbReference>
<dbReference type="NCBIfam" id="TIGR00838">
    <property type="entry name" value="argH"/>
    <property type="match status" value="1"/>
</dbReference>
<dbReference type="NCBIfam" id="NF008964">
    <property type="entry name" value="PRK12308.1"/>
    <property type="match status" value="1"/>
</dbReference>
<dbReference type="PANTHER" id="PTHR43814">
    <property type="entry name" value="ARGININOSUCCINATE LYASE"/>
    <property type="match status" value="1"/>
</dbReference>
<dbReference type="PANTHER" id="PTHR43814:SF1">
    <property type="entry name" value="ARGININOSUCCINATE LYASE"/>
    <property type="match status" value="1"/>
</dbReference>
<dbReference type="Pfam" id="PF14698">
    <property type="entry name" value="ASL_C2"/>
    <property type="match status" value="1"/>
</dbReference>
<dbReference type="Pfam" id="PF00206">
    <property type="entry name" value="Lyase_1"/>
    <property type="match status" value="1"/>
</dbReference>
<dbReference type="PRINTS" id="PR00145">
    <property type="entry name" value="ARGSUCLYASE"/>
</dbReference>
<dbReference type="PRINTS" id="PR00149">
    <property type="entry name" value="FUMRATELYASE"/>
</dbReference>
<dbReference type="SUPFAM" id="SSF48557">
    <property type="entry name" value="L-aspartase-like"/>
    <property type="match status" value="1"/>
</dbReference>
<dbReference type="PROSITE" id="PS00163">
    <property type="entry name" value="FUMARATE_LYASES"/>
    <property type="match status" value="1"/>
</dbReference>
<evidence type="ECO:0000255" key="1">
    <source>
        <dbReference type="HAMAP-Rule" id="MF_00006"/>
    </source>
</evidence>
<comment type="catalytic activity">
    <reaction evidence="1">
        <text>2-(N(omega)-L-arginino)succinate = fumarate + L-arginine</text>
        <dbReference type="Rhea" id="RHEA:24020"/>
        <dbReference type="ChEBI" id="CHEBI:29806"/>
        <dbReference type="ChEBI" id="CHEBI:32682"/>
        <dbReference type="ChEBI" id="CHEBI:57472"/>
        <dbReference type="EC" id="4.3.2.1"/>
    </reaction>
</comment>
<comment type="pathway">
    <text evidence="1">Amino-acid biosynthesis; L-arginine biosynthesis; L-arginine from L-ornithine and carbamoyl phosphate: step 3/3.</text>
</comment>
<comment type="subcellular location">
    <subcellularLocation>
        <location evidence="1">Cytoplasm</location>
    </subcellularLocation>
</comment>
<comment type="similarity">
    <text evidence="1">Belongs to the lyase 1 family. Argininosuccinate lyase subfamily.</text>
</comment>